<feature type="chain" id="PRO_1000054377" description="Type III pantothenate kinase">
    <location>
        <begin position="1"/>
        <end position="250"/>
    </location>
</feature>
<feature type="active site" description="Proton acceptor" evidence="1">
    <location>
        <position position="105"/>
    </location>
</feature>
<feature type="binding site" evidence="1">
    <location>
        <begin position="6"/>
        <end position="13"/>
    </location>
    <ligand>
        <name>ATP</name>
        <dbReference type="ChEBI" id="CHEBI:30616"/>
    </ligand>
</feature>
<feature type="binding site" evidence="1">
    <location>
        <begin position="103"/>
        <end position="106"/>
    </location>
    <ligand>
        <name>substrate</name>
    </ligand>
</feature>
<feature type="binding site" evidence="1">
    <location>
        <position position="125"/>
    </location>
    <ligand>
        <name>K(+)</name>
        <dbReference type="ChEBI" id="CHEBI:29103"/>
    </ligand>
</feature>
<feature type="binding site" evidence="1">
    <location>
        <position position="128"/>
    </location>
    <ligand>
        <name>ATP</name>
        <dbReference type="ChEBI" id="CHEBI:30616"/>
    </ligand>
</feature>
<feature type="binding site" evidence="1">
    <location>
        <position position="180"/>
    </location>
    <ligand>
        <name>substrate</name>
    </ligand>
</feature>
<protein>
    <recommendedName>
        <fullName evidence="1">Type III pantothenate kinase</fullName>
        <ecNumber evidence="1">2.7.1.33</ecNumber>
    </recommendedName>
    <alternativeName>
        <fullName evidence="1">PanK-III</fullName>
    </alternativeName>
    <alternativeName>
        <fullName evidence="1">Pantothenic acid kinase</fullName>
    </alternativeName>
</protein>
<name>COAX_FRAAA</name>
<gene>
    <name evidence="1" type="primary">coaX</name>
    <name type="ordered locus">FRAAL6674</name>
</gene>
<keyword id="KW-0067">ATP-binding</keyword>
<keyword id="KW-0173">Coenzyme A biosynthesis</keyword>
<keyword id="KW-0963">Cytoplasm</keyword>
<keyword id="KW-0418">Kinase</keyword>
<keyword id="KW-0479">Metal-binding</keyword>
<keyword id="KW-0547">Nucleotide-binding</keyword>
<keyword id="KW-0630">Potassium</keyword>
<keyword id="KW-1185">Reference proteome</keyword>
<keyword id="KW-0808">Transferase</keyword>
<proteinExistence type="inferred from homology"/>
<reference key="1">
    <citation type="journal article" date="2007" name="Genome Res.">
        <title>Genome characteristics of facultatively symbiotic Frankia sp. strains reflect host range and host plant biogeography.</title>
        <authorList>
            <person name="Normand P."/>
            <person name="Lapierre P."/>
            <person name="Tisa L.S."/>
            <person name="Gogarten J.P."/>
            <person name="Alloisio N."/>
            <person name="Bagnarol E."/>
            <person name="Bassi C.A."/>
            <person name="Berry A.M."/>
            <person name="Bickhart D.M."/>
            <person name="Choisne N."/>
            <person name="Couloux A."/>
            <person name="Cournoyer B."/>
            <person name="Cruveiller S."/>
            <person name="Daubin V."/>
            <person name="Demange N."/>
            <person name="Francino M.P."/>
            <person name="Goltsman E."/>
            <person name="Huang Y."/>
            <person name="Kopp O.R."/>
            <person name="Labarre L."/>
            <person name="Lapidus A."/>
            <person name="Lavire C."/>
            <person name="Marechal J."/>
            <person name="Martinez M."/>
            <person name="Mastronunzio J.E."/>
            <person name="Mullin B.C."/>
            <person name="Niemann J."/>
            <person name="Pujic P."/>
            <person name="Rawnsley T."/>
            <person name="Rouy Z."/>
            <person name="Schenowitz C."/>
            <person name="Sellstedt A."/>
            <person name="Tavares F."/>
            <person name="Tomkins J.P."/>
            <person name="Vallenet D."/>
            <person name="Valverde C."/>
            <person name="Wall L.G."/>
            <person name="Wang Y."/>
            <person name="Medigue C."/>
            <person name="Benson D.R."/>
        </authorList>
    </citation>
    <scope>NUCLEOTIDE SEQUENCE [LARGE SCALE GENOMIC DNA]</scope>
    <source>
        <strain>DSM 45986 / CECT 9034 / ACN14a</strain>
    </source>
</reference>
<organism>
    <name type="scientific">Frankia alni (strain DSM 45986 / CECT 9034 / ACN14a)</name>
    <dbReference type="NCBI Taxonomy" id="326424"/>
    <lineage>
        <taxon>Bacteria</taxon>
        <taxon>Bacillati</taxon>
        <taxon>Actinomycetota</taxon>
        <taxon>Actinomycetes</taxon>
        <taxon>Frankiales</taxon>
        <taxon>Frankiaceae</taxon>
        <taxon>Frankia</taxon>
    </lineage>
</organism>
<evidence type="ECO:0000255" key="1">
    <source>
        <dbReference type="HAMAP-Rule" id="MF_01274"/>
    </source>
</evidence>
<accession>Q0RB90</accession>
<sequence length="250" mass="26570">MLLAIDVGNTNTVVGVFDGDDLADSWRVRTDPHATADELVLLYRGLLGEHRITGVSICSTVPAALRELRRMVVRAFRDLPVVIVEPGTRTGVPILIDNPKEAGADRIMNTLAAHHLYGGPAIVVDFGTSTNLDVVSARGEFIGGVLAPGIEIALDALASRAAQLRKVELTPPRSVIGKSTVEALQSGMIYGVAGQVDGLVRRIRAELGAHATAIATGGLASLVVKESETLDRHEPHLTLIGLRLVFEKNI</sequence>
<comment type="function">
    <text evidence="1">Catalyzes the phosphorylation of pantothenate (Pan), the first step in CoA biosynthesis.</text>
</comment>
<comment type="catalytic activity">
    <reaction evidence="1">
        <text>(R)-pantothenate + ATP = (R)-4'-phosphopantothenate + ADP + H(+)</text>
        <dbReference type="Rhea" id="RHEA:16373"/>
        <dbReference type="ChEBI" id="CHEBI:10986"/>
        <dbReference type="ChEBI" id="CHEBI:15378"/>
        <dbReference type="ChEBI" id="CHEBI:29032"/>
        <dbReference type="ChEBI" id="CHEBI:30616"/>
        <dbReference type="ChEBI" id="CHEBI:456216"/>
        <dbReference type="EC" id="2.7.1.33"/>
    </reaction>
</comment>
<comment type="cofactor">
    <cofactor evidence="1">
        <name>NH4(+)</name>
        <dbReference type="ChEBI" id="CHEBI:28938"/>
    </cofactor>
    <cofactor evidence="1">
        <name>K(+)</name>
        <dbReference type="ChEBI" id="CHEBI:29103"/>
    </cofactor>
    <text evidence="1">A monovalent cation. Ammonium or potassium.</text>
</comment>
<comment type="pathway">
    <text evidence="1">Cofactor biosynthesis; coenzyme A biosynthesis; CoA from (R)-pantothenate: step 1/5.</text>
</comment>
<comment type="subunit">
    <text evidence="1">Homodimer.</text>
</comment>
<comment type="subcellular location">
    <subcellularLocation>
        <location evidence="1">Cytoplasm</location>
    </subcellularLocation>
</comment>
<comment type="similarity">
    <text evidence="1">Belongs to the type III pantothenate kinase family.</text>
</comment>
<dbReference type="EC" id="2.7.1.33" evidence="1"/>
<dbReference type="EMBL" id="CT573213">
    <property type="protein sequence ID" value="CAJ65297.2"/>
    <property type="molecule type" value="Genomic_DNA"/>
</dbReference>
<dbReference type="RefSeq" id="WP_011607711.1">
    <property type="nucleotide sequence ID" value="NC_008278.1"/>
</dbReference>
<dbReference type="SMR" id="Q0RB90"/>
<dbReference type="STRING" id="326424.FRAAL6674"/>
<dbReference type="KEGG" id="fal:FRAAL6674"/>
<dbReference type="eggNOG" id="COG1521">
    <property type="taxonomic scope" value="Bacteria"/>
</dbReference>
<dbReference type="HOGENOM" id="CLU_066627_1_0_11"/>
<dbReference type="OrthoDB" id="9804707at2"/>
<dbReference type="UniPathway" id="UPA00241">
    <property type="reaction ID" value="UER00352"/>
</dbReference>
<dbReference type="Proteomes" id="UP000000657">
    <property type="component" value="Chromosome"/>
</dbReference>
<dbReference type="GO" id="GO:0005737">
    <property type="term" value="C:cytoplasm"/>
    <property type="evidence" value="ECO:0007669"/>
    <property type="project" value="UniProtKB-SubCell"/>
</dbReference>
<dbReference type="GO" id="GO:0005524">
    <property type="term" value="F:ATP binding"/>
    <property type="evidence" value="ECO:0007669"/>
    <property type="project" value="UniProtKB-UniRule"/>
</dbReference>
<dbReference type="GO" id="GO:0046872">
    <property type="term" value="F:metal ion binding"/>
    <property type="evidence" value="ECO:0007669"/>
    <property type="project" value="UniProtKB-KW"/>
</dbReference>
<dbReference type="GO" id="GO:0004594">
    <property type="term" value="F:pantothenate kinase activity"/>
    <property type="evidence" value="ECO:0007669"/>
    <property type="project" value="UniProtKB-UniRule"/>
</dbReference>
<dbReference type="GO" id="GO:0015937">
    <property type="term" value="P:coenzyme A biosynthetic process"/>
    <property type="evidence" value="ECO:0007669"/>
    <property type="project" value="UniProtKB-UniRule"/>
</dbReference>
<dbReference type="CDD" id="cd24015">
    <property type="entry name" value="ASKHA_NBD_PanK-III"/>
    <property type="match status" value="1"/>
</dbReference>
<dbReference type="Gene3D" id="3.30.420.40">
    <property type="match status" value="2"/>
</dbReference>
<dbReference type="HAMAP" id="MF_01274">
    <property type="entry name" value="Pantothen_kinase_3"/>
    <property type="match status" value="1"/>
</dbReference>
<dbReference type="InterPro" id="IPR043129">
    <property type="entry name" value="ATPase_NBD"/>
</dbReference>
<dbReference type="InterPro" id="IPR004619">
    <property type="entry name" value="Type_III_PanK"/>
</dbReference>
<dbReference type="NCBIfam" id="TIGR00671">
    <property type="entry name" value="baf"/>
    <property type="match status" value="1"/>
</dbReference>
<dbReference type="NCBIfam" id="NF009845">
    <property type="entry name" value="PRK13318.1-3"/>
    <property type="match status" value="1"/>
</dbReference>
<dbReference type="NCBIfam" id="NF009855">
    <property type="entry name" value="PRK13321.1"/>
    <property type="match status" value="1"/>
</dbReference>
<dbReference type="PANTHER" id="PTHR34265">
    <property type="entry name" value="TYPE III PANTOTHENATE KINASE"/>
    <property type="match status" value="1"/>
</dbReference>
<dbReference type="PANTHER" id="PTHR34265:SF1">
    <property type="entry name" value="TYPE III PANTOTHENATE KINASE"/>
    <property type="match status" value="1"/>
</dbReference>
<dbReference type="Pfam" id="PF03309">
    <property type="entry name" value="Pan_kinase"/>
    <property type="match status" value="1"/>
</dbReference>
<dbReference type="SUPFAM" id="SSF53067">
    <property type="entry name" value="Actin-like ATPase domain"/>
    <property type="match status" value="2"/>
</dbReference>